<reference key="1">
    <citation type="journal article" date="2003" name="Nature">
        <title>The DNA sequence and analysis of human chromosome 6.</title>
        <authorList>
            <person name="Mungall A.J."/>
            <person name="Palmer S.A."/>
            <person name="Sims S.K."/>
            <person name="Edwards C.A."/>
            <person name="Ashurst J.L."/>
            <person name="Wilming L."/>
            <person name="Jones M.C."/>
            <person name="Horton R."/>
            <person name="Hunt S.E."/>
            <person name="Scott C.E."/>
            <person name="Gilbert J.G.R."/>
            <person name="Clamp M.E."/>
            <person name="Bethel G."/>
            <person name="Milne S."/>
            <person name="Ainscough R."/>
            <person name="Almeida J.P."/>
            <person name="Ambrose K.D."/>
            <person name="Andrews T.D."/>
            <person name="Ashwell R.I.S."/>
            <person name="Babbage A.K."/>
            <person name="Bagguley C.L."/>
            <person name="Bailey J."/>
            <person name="Banerjee R."/>
            <person name="Barker D.J."/>
            <person name="Barlow K.F."/>
            <person name="Bates K."/>
            <person name="Beare D.M."/>
            <person name="Beasley H."/>
            <person name="Beasley O."/>
            <person name="Bird C.P."/>
            <person name="Blakey S.E."/>
            <person name="Bray-Allen S."/>
            <person name="Brook J."/>
            <person name="Brown A.J."/>
            <person name="Brown J.Y."/>
            <person name="Burford D.C."/>
            <person name="Burrill W."/>
            <person name="Burton J."/>
            <person name="Carder C."/>
            <person name="Carter N.P."/>
            <person name="Chapman J.C."/>
            <person name="Clark S.Y."/>
            <person name="Clark G."/>
            <person name="Clee C.M."/>
            <person name="Clegg S."/>
            <person name="Cobley V."/>
            <person name="Collier R.E."/>
            <person name="Collins J.E."/>
            <person name="Colman L.K."/>
            <person name="Corby N.R."/>
            <person name="Coville G.J."/>
            <person name="Culley K.M."/>
            <person name="Dhami P."/>
            <person name="Davies J."/>
            <person name="Dunn M."/>
            <person name="Earthrowl M.E."/>
            <person name="Ellington A.E."/>
            <person name="Evans K.A."/>
            <person name="Faulkner L."/>
            <person name="Francis M.D."/>
            <person name="Frankish A."/>
            <person name="Frankland J."/>
            <person name="French L."/>
            <person name="Garner P."/>
            <person name="Garnett J."/>
            <person name="Ghori M.J."/>
            <person name="Gilby L.M."/>
            <person name="Gillson C.J."/>
            <person name="Glithero R.J."/>
            <person name="Grafham D.V."/>
            <person name="Grant M."/>
            <person name="Gribble S."/>
            <person name="Griffiths C."/>
            <person name="Griffiths M.N.D."/>
            <person name="Hall R."/>
            <person name="Halls K.S."/>
            <person name="Hammond S."/>
            <person name="Harley J.L."/>
            <person name="Hart E.A."/>
            <person name="Heath P.D."/>
            <person name="Heathcott R."/>
            <person name="Holmes S.J."/>
            <person name="Howden P.J."/>
            <person name="Howe K.L."/>
            <person name="Howell G.R."/>
            <person name="Huckle E."/>
            <person name="Humphray S.J."/>
            <person name="Humphries M.D."/>
            <person name="Hunt A.R."/>
            <person name="Johnson C.M."/>
            <person name="Joy A.A."/>
            <person name="Kay M."/>
            <person name="Keenan S.J."/>
            <person name="Kimberley A.M."/>
            <person name="King A."/>
            <person name="Laird G.K."/>
            <person name="Langford C."/>
            <person name="Lawlor S."/>
            <person name="Leongamornlert D.A."/>
            <person name="Leversha M."/>
            <person name="Lloyd C.R."/>
            <person name="Lloyd D.M."/>
            <person name="Loveland J.E."/>
            <person name="Lovell J."/>
            <person name="Martin S."/>
            <person name="Mashreghi-Mohammadi M."/>
            <person name="Maslen G.L."/>
            <person name="Matthews L."/>
            <person name="McCann O.T."/>
            <person name="McLaren S.J."/>
            <person name="McLay K."/>
            <person name="McMurray A."/>
            <person name="Moore M.J.F."/>
            <person name="Mullikin J.C."/>
            <person name="Niblett D."/>
            <person name="Nickerson T."/>
            <person name="Novik K.L."/>
            <person name="Oliver K."/>
            <person name="Overton-Larty E.K."/>
            <person name="Parker A."/>
            <person name="Patel R."/>
            <person name="Pearce A.V."/>
            <person name="Peck A.I."/>
            <person name="Phillimore B.J.C.T."/>
            <person name="Phillips S."/>
            <person name="Plumb R.W."/>
            <person name="Porter K.M."/>
            <person name="Ramsey Y."/>
            <person name="Ranby S.A."/>
            <person name="Rice C.M."/>
            <person name="Ross M.T."/>
            <person name="Searle S.M."/>
            <person name="Sehra H.K."/>
            <person name="Sheridan E."/>
            <person name="Skuce C.D."/>
            <person name="Smith S."/>
            <person name="Smith M."/>
            <person name="Spraggon L."/>
            <person name="Squares S.L."/>
            <person name="Steward C.A."/>
            <person name="Sycamore N."/>
            <person name="Tamlyn-Hall G."/>
            <person name="Tester J."/>
            <person name="Theaker A.J."/>
            <person name="Thomas D.W."/>
            <person name="Thorpe A."/>
            <person name="Tracey A."/>
            <person name="Tromans A."/>
            <person name="Tubby B."/>
            <person name="Wall M."/>
            <person name="Wallis J.M."/>
            <person name="West A.P."/>
            <person name="White S.S."/>
            <person name="Whitehead S.L."/>
            <person name="Whittaker H."/>
            <person name="Wild A."/>
            <person name="Willey D.J."/>
            <person name="Wilmer T.E."/>
            <person name="Wood J.M."/>
            <person name="Wray P.W."/>
            <person name="Wyatt J.C."/>
            <person name="Young L."/>
            <person name="Younger R.M."/>
            <person name="Bentley D.R."/>
            <person name="Coulson A."/>
            <person name="Durbin R.M."/>
            <person name="Hubbard T."/>
            <person name="Sulston J.E."/>
            <person name="Dunham I."/>
            <person name="Rogers J."/>
            <person name="Beck S."/>
        </authorList>
    </citation>
    <scope>NUCLEOTIDE SEQUENCE [LARGE SCALE GENOMIC DNA]</scope>
</reference>
<reference key="2">
    <citation type="journal article" date="2004" name="Genome Res.">
        <title>The status, quality, and expansion of the NIH full-length cDNA project: the Mammalian Gene Collection (MGC).</title>
        <authorList>
            <consortium name="The MGC Project Team"/>
        </authorList>
    </citation>
    <scope>NUCLEOTIDE SEQUENCE [LARGE SCALE MRNA]</scope>
</reference>
<organism>
    <name type="scientific">Homo sapiens</name>
    <name type="common">Human</name>
    <dbReference type="NCBI Taxonomy" id="9606"/>
    <lineage>
        <taxon>Eukaryota</taxon>
        <taxon>Metazoa</taxon>
        <taxon>Chordata</taxon>
        <taxon>Craniata</taxon>
        <taxon>Vertebrata</taxon>
        <taxon>Euteleostomi</taxon>
        <taxon>Mammalia</taxon>
        <taxon>Eutheria</taxon>
        <taxon>Euarchontoglires</taxon>
        <taxon>Primates</taxon>
        <taxon>Haplorrhini</taxon>
        <taxon>Catarrhini</taxon>
        <taxon>Hominidae</taxon>
        <taxon>Homo</taxon>
    </lineage>
</organism>
<accession>H3BR10</accession>
<keyword id="KW-0472">Membrane</keyword>
<keyword id="KW-1267">Proteomics identification</keyword>
<keyword id="KW-1185">Reference proteome</keyword>
<keyword id="KW-0812">Transmembrane</keyword>
<keyword id="KW-1133">Transmembrane helix</keyword>
<comment type="interaction">
    <interactant intactId="EBI-10178109">
        <id>H3BR10</id>
    </interactant>
    <interactant intactId="EBI-10178113">
        <id>Q96G97-4</id>
        <label>BSCL2</label>
    </interactant>
    <organismsDiffer>false</organismsDiffer>
    <experiments>3</experiments>
</comment>
<comment type="subcellular location">
    <subcellularLocation>
        <location evidence="3">Membrane</location>
        <topology evidence="3">Multi-pass membrane protein</topology>
    </subcellularLocation>
</comment>
<proteinExistence type="evidence at protein level"/>
<gene>
    <name type="primary">SMLR1</name>
</gene>
<evidence type="ECO:0000255" key="1"/>
<evidence type="ECO:0000256" key="2">
    <source>
        <dbReference type="SAM" id="MobiDB-lite"/>
    </source>
</evidence>
<evidence type="ECO:0000305" key="3"/>
<name>SMLR1_HUMAN</name>
<sequence>MLSKGRSPRRKQVQTQRKAALVLSVTPMVPVGSVWLAMSSVLSAFMRELPGWFLFFGVFLPVTLLLLLLIAYFRIKLIEVNEELSQNCDRQHNPKDGSSLYQRMKWT</sequence>
<dbReference type="EMBL" id="AL109938">
    <property type="status" value="NOT_ANNOTATED_CDS"/>
    <property type="molecule type" value="Genomic_DNA"/>
</dbReference>
<dbReference type="EMBL" id="BC113027">
    <property type="status" value="NOT_ANNOTATED_CDS"/>
    <property type="molecule type" value="mRNA"/>
</dbReference>
<dbReference type="CCDS" id="CCDS59036.1"/>
<dbReference type="RefSeq" id="NP_001182526.1">
    <property type="nucleotide sequence ID" value="NM_001195597.2"/>
</dbReference>
<dbReference type="BioGRID" id="130191">
    <property type="interactions" value="2"/>
</dbReference>
<dbReference type="IntAct" id="H3BR10">
    <property type="interactions" value="1"/>
</dbReference>
<dbReference type="STRING" id="9606.ENSP00000456026"/>
<dbReference type="iPTMnet" id="H3BR10"/>
<dbReference type="PhosphoSitePlus" id="H3BR10"/>
<dbReference type="BioMuta" id="SMLR1"/>
<dbReference type="jPOST" id="H3BR10"/>
<dbReference type="MassIVE" id="H3BR10"/>
<dbReference type="PaxDb" id="9606-ENSP00000456026"/>
<dbReference type="PeptideAtlas" id="H3BR10"/>
<dbReference type="Antibodypedia" id="74935">
    <property type="antibodies" value="4 antibodies from 4 providers"/>
</dbReference>
<dbReference type="DNASU" id="100507203"/>
<dbReference type="Ensembl" id="ENST00000541421.2">
    <property type="protein sequence ID" value="ENSP00000456026.1"/>
    <property type="gene ID" value="ENSG00000256162.2"/>
</dbReference>
<dbReference type="GeneID" id="100507203"/>
<dbReference type="KEGG" id="hsa:100507203"/>
<dbReference type="MANE-Select" id="ENST00000541421.2">
    <property type="protein sequence ID" value="ENSP00000456026.1"/>
    <property type="RefSeq nucleotide sequence ID" value="NM_001195597.2"/>
    <property type="RefSeq protein sequence ID" value="NP_001182526.1"/>
</dbReference>
<dbReference type="UCSC" id="uc011ebx.3">
    <property type="organism name" value="human"/>
</dbReference>
<dbReference type="AGR" id="HGNC:44670"/>
<dbReference type="CTD" id="100507203"/>
<dbReference type="DisGeNET" id="100507203"/>
<dbReference type="GeneCards" id="SMLR1"/>
<dbReference type="HGNC" id="HGNC:44670">
    <property type="gene designation" value="SMLR1"/>
</dbReference>
<dbReference type="HPA" id="ENSG00000256162">
    <property type="expression patterns" value="Tissue enriched (liver)"/>
</dbReference>
<dbReference type="neXtProt" id="NX_H3BR10"/>
<dbReference type="OpenTargets" id="ENSG00000256162"/>
<dbReference type="VEuPathDB" id="HostDB:ENSG00000256162"/>
<dbReference type="eggNOG" id="ENOG502SYE8">
    <property type="taxonomic scope" value="Eukaryota"/>
</dbReference>
<dbReference type="GeneTree" id="ENSGT00560000078592"/>
<dbReference type="HOGENOM" id="CLU_176395_0_0_1"/>
<dbReference type="InParanoid" id="H3BR10"/>
<dbReference type="OMA" id="YFRTKLM"/>
<dbReference type="OrthoDB" id="9048909at2759"/>
<dbReference type="PAN-GO" id="H3BR10">
    <property type="GO annotations" value="0 GO annotations based on evolutionary models"/>
</dbReference>
<dbReference type="PathwayCommons" id="H3BR10"/>
<dbReference type="BioGRID-ORCS" id="100507203">
    <property type="hits" value="7 hits in 1128 CRISPR screens"/>
</dbReference>
<dbReference type="GenomeRNAi" id="100507203"/>
<dbReference type="Pharos" id="H3BR10">
    <property type="development level" value="Tdark"/>
</dbReference>
<dbReference type="PRO" id="PR:H3BR10"/>
<dbReference type="Proteomes" id="UP000005640">
    <property type="component" value="Chromosome 6"/>
</dbReference>
<dbReference type="RNAct" id="H3BR10">
    <property type="molecule type" value="protein"/>
</dbReference>
<dbReference type="Bgee" id="ENSG00000256162">
    <property type="expression patterns" value="Expressed in jejunal mucosa and 39 other cell types or tissues"/>
</dbReference>
<dbReference type="GO" id="GO:0016020">
    <property type="term" value="C:membrane"/>
    <property type="evidence" value="ECO:0007669"/>
    <property type="project" value="UniProtKB-SubCell"/>
</dbReference>
<feature type="chain" id="PRO_0000421260" description="Small leucine-rich protein 1">
    <location>
        <begin position="1"/>
        <end position="107"/>
    </location>
</feature>
<feature type="transmembrane region" description="Helical" evidence="1">
    <location>
        <begin position="19"/>
        <end position="39"/>
    </location>
</feature>
<feature type="transmembrane region" description="Helical" evidence="1">
    <location>
        <begin position="53"/>
        <end position="73"/>
    </location>
</feature>
<feature type="region of interest" description="Disordered" evidence="2">
    <location>
        <begin position="85"/>
        <end position="107"/>
    </location>
</feature>
<protein>
    <recommendedName>
        <fullName>Small leucine-rich protein 1</fullName>
    </recommendedName>
</protein>